<feature type="chain" id="PRO_0000132645" description="Small ribosomal subunit protein uS4c">
    <location>
        <begin position="1" status="less than"/>
        <end position="196" status="greater than"/>
    </location>
</feature>
<feature type="domain" description="S4 RNA-binding">
    <location>
        <begin position="82"/>
        <end position="143"/>
    </location>
</feature>
<feature type="non-terminal residue">
    <location>
        <position position="1"/>
    </location>
</feature>
<feature type="non-terminal residue">
    <location>
        <position position="196"/>
    </location>
</feature>
<sequence>RFKKIRRLGALPGLTSKRPRSGNDLKNQLRSVKRSQYRIRLEEKQKLRFHYGLTERQLLKYVHIAGKVKGSTGQVLLQLLEMRLDNILFRLGMASTIPGARQLVNHRHILVNGRIVDIPSYRCKPQDIITTKDKQKSKALIQNYIASSTQPQEELPNHLTIDPFQYKGLVNQIRDSKWIGLKINELLVVEYYSRQT</sequence>
<organism>
    <name type="scientific">Patersonia sp. (strain Lejeune 1997)</name>
    <dbReference type="NCBI Taxonomy" id="58969"/>
    <lineage>
        <taxon>Eukaryota</taxon>
        <taxon>Viridiplantae</taxon>
        <taxon>Streptophyta</taxon>
        <taxon>Embryophyta</taxon>
        <taxon>Tracheophyta</taxon>
        <taxon>Spermatophyta</taxon>
        <taxon>Magnoliopsida</taxon>
        <taxon>Liliopsida</taxon>
        <taxon>Asparagales</taxon>
        <taxon>Iridaceae</taxon>
        <taxon>Patersonioideae</taxon>
        <taxon>Patersonia</taxon>
    </lineage>
</organism>
<comment type="function">
    <text evidence="1">One of the primary rRNA binding proteins, it binds directly to 16S rRNA where it nucleates assembly of the body of the 30S subunit.</text>
</comment>
<comment type="function">
    <text evidence="1">With S5 and S12 plays an important role in translational accuracy.</text>
</comment>
<comment type="subunit">
    <text evidence="1">Part of the 30S ribosomal subunit. Contacts protein S5. The interaction surface between S4 and S5 is involved in control of translational fidelity (By similarity).</text>
</comment>
<comment type="subcellular location">
    <subcellularLocation>
        <location>Plastid</location>
        <location>Chloroplast</location>
    </subcellularLocation>
</comment>
<comment type="similarity">
    <text evidence="2">Belongs to the universal ribosomal protein uS4 family.</text>
</comment>
<gene>
    <name type="primary">rps4</name>
</gene>
<proteinExistence type="inferred from homology"/>
<dbReference type="EMBL" id="Z68259">
    <property type="protein sequence ID" value="CAA92557.1"/>
    <property type="molecule type" value="Genomic_DNA"/>
</dbReference>
<dbReference type="SMR" id="O36052"/>
<dbReference type="GO" id="GO:0009507">
    <property type="term" value="C:chloroplast"/>
    <property type="evidence" value="ECO:0007669"/>
    <property type="project" value="UniProtKB-SubCell"/>
</dbReference>
<dbReference type="GO" id="GO:0015935">
    <property type="term" value="C:small ribosomal subunit"/>
    <property type="evidence" value="ECO:0007669"/>
    <property type="project" value="InterPro"/>
</dbReference>
<dbReference type="GO" id="GO:0019843">
    <property type="term" value="F:rRNA binding"/>
    <property type="evidence" value="ECO:0007669"/>
    <property type="project" value="UniProtKB-KW"/>
</dbReference>
<dbReference type="GO" id="GO:0003735">
    <property type="term" value="F:structural constituent of ribosome"/>
    <property type="evidence" value="ECO:0007669"/>
    <property type="project" value="InterPro"/>
</dbReference>
<dbReference type="GO" id="GO:0042274">
    <property type="term" value="P:ribosomal small subunit biogenesis"/>
    <property type="evidence" value="ECO:0007669"/>
    <property type="project" value="TreeGrafter"/>
</dbReference>
<dbReference type="GO" id="GO:0006412">
    <property type="term" value="P:translation"/>
    <property type="evidence" value="ECO:0007669"/>
    <property type="project" value="InterPro"/>
</dbReference>
<dbReference type="CDD" id="cd00165">
    <property type="entry name" value="S4"/>
    <property type="match status" value="1"/>
</dbReference>
<dbReference type="FunFam" id="1.10.1050.10:FF:000002">
    <property type="entry name" value="30S ribosomal protein S4, chloroplastic"/>
    <property type="match status" value="1"/>
</dbReference>
<dbReference type="FunFam" id="3.10.290.10:FF:000081">
    <property type="entry name" value="30S ribosomal protein S4, chloroplastic"/>
    <property type="match status" value="1"/>
</dbReference>
<dbReference type="Gene3D" id="1.10.1050.10">
    <property type="entry name" value="Ribosomal Protein S4 Delta 41, Chain A, domain 1"/>
    <property type="match status" value="1"/>
</dbReference>
<dbReference type="Gene3D" id="3.10.290.10">
    <property type="entry name" value="RNA-binding S4 domain"/>
    <property type="match status" value="1"/>
</dbReference>
<dbReference type="HAMAP" id="MF_01306_B">
    <property type="entry name" value="Ribosomal_uS4_B"/>
    <property type="match status" value="1"/>
</dbReference>
<dbReference type="InterPro" id="IPR022801">
    <property type="entry name" value="Ribosomal_uS4"/>
</dbReference>
<dbReference type="InterPro" id="IPR005709">
    <property type="entry name" value="Ribosomal_uS4_bac-type"/>
</dbReference>
<dbReference type="InterPro" id="IPR018079">
    <property type="entry name" value="Ribosomal_uS4_CS"/>
</dbReference>
<dbReference type="InterPro" id="IPR001912">
    <property type="entry name" value="Ribosomal_uS4_N"/>
</dbReference>
<dbReference type="InterPro" id="IPR002942">
    <property type="entry name" value="S4_RNA-bd"/>
</dbReference>
<dbReference type="InterPro" id="IPR036986">
    <property type="entry name" value="S4_RNA-bd_sf"/>
</dbReference>
<dbReference type="NCBIfam" id="NF003717">
    <property type="entry name" value="PRK05327.1"/>
    <property type="match status" value="1"/>
</dbReference>
<dbReference type="NCBIfam" id="TIGR01017">
    <property type="entry name" value="rpsD_bact"/>
    <property type="match status" value="1"/>
</dbReference>
<dbReference type="PANTHER" id="PTHR11831">
    <property type="entry name" value="30S 40S RIBOSOMAL PROTEIN"/>
    <property type="match status" value="1"/>
</dbReference>
<dbReference type="PANTHER" id="PTHR11831:SF4">
    <property type="entry name" value="SMALL RIBOSOMAL SUBUNIT PROTEIN US4M"/>
    <property type="match status" value="1"/>
</dbReference>
<dbReference type="Pfam" id="PF00163">
    <property type="entry name" value="Ribosomal_S4"/>
    <property type="match status" value="1"/>
</dbReference>
<dbReference type="Pfam" id="PF01479">
    <property type="entry name" value="S4"/>
    <property type="match status" value="1"/>
</dbReference>
<dbReference type="SMART" id="SM01390">
    <property type="entry name" value="Ribosomal_S4"/>
    <property type="match status" value="1"/>
</dbReference>
<dbReference type="SMART" id="SM00363">
    <property type="entry name" value="S4"/>
    <property type="match status" value="1"/>
</dbReference>
<dbReference type="SUPFAM" id="SSF55174">
    <property type="entry name" value="Alpha-L RNA-binding motif"/>
    <property type="match status" value="1"/>
</dbReference>
<dbReference type="PROSITE" id="PS00632">
    <property type="entry name" value="RIBOSOMAL_S4"/>
    <property type="match status" value="1"/>
</dbReference>
<dbReference type="PROSITE" id="PS50889">
    <property type="entry name" value="S4"/>
    <property type="match status" value="1"/>
</dbReference>
<keyword id="KW-0150">Chloroplast</keyword>
<keyword id="KW-0934">Plastid</keyword>
<keyword id="KW-0687">Ribonucleoprotein</keyword>
<keyword id="KW-0689">Ribosomal protein</keyword>
<keyword id="KW-0694">RNA-binding</keyword>
<keyword id="KW-0699">rRNA-binding</keyword>
<protein>
    <recommendedName>
        <fullName evidence="2">Small ribosomal subunit protein uS4c</fullName>
    </recommendedName>
    <alternativeName>
        <fullName>30S ribosomal protein S4, chloroplastic</fullName>
    </alternativeName>
</protein>
<geneLocation type="chloroplast"/>
<name>RR4_PATSQ</name>
<reference key="1">
    <citation type="journal article" date="1997" name="Plant Syst. Evol.">
        <title>Phylogenetic analysis of Iridaceae with parsimony and distance methods using the plastid gene rps4.</title>
        <authorList>
            <person name="Souza-Chies T.T."/>
            <person name="Bittar G."/>
            <person name="Nadot S."/>
            <person name="Carter L."/>
            <person name="Besin E."/>
            <person name="Lejeune B.P."/>
        </authorList>
    </citation>
    <scope>NUCLEOTIDE SEQUENCE [GENOMIC DNA]</scope>
</reference>
<evidence type="ECO:0000250" key="1"/>
<evidence type="ECO:0000305" key="2"/>
<accession>O36052</accession>